<organism>
    <name type="scientific">Pectobacterium carotovorum subsp. carotovorum (strain PC1)</name>
    <dbReference type="NCBI Taxonomy" id="561230"/>
    <lineage>
        <taxon>Bacteria</taxon>
        <taxon>Pseudomonadati</taxon>
        <taxon>Pseudomonadota</taxon>
        <taxon>Gammaproteobacteria</taxon>
        <taxon>Enterobacterales</taxon>
        <taxon>Pectobacteriaceae</taxon>
        <taxon>Pectobacterium</taxon>
    </lineage>
</organism>
<proteinExistence type="inferred from homology"/>
<evidence type="ECO:0000255" key="1">
    <source>
        <dbReference type="HAMAP-Rule" id="MF_00595"/>
    </source>
</evidence>
<keyword id="KW-0120">Carbon dioxide fixation</keyword>
<keyword id="KW-0456">Lyase</keyword>
<keyword id="KW-0460">Magnesium</keyword>
<gene>
    <name evidence="1" type="primary">ppc</name>
    <name type="ordered locus">PC1_4065</name>
</gene>
<accession>C6DI86</accession>
<protein>
    <recommendedName>
        <fullName evidence="1">Phosphoenolpyruvate carboxylase</fullName>
        <shortName evidence="1">PEPC</shortName>
        <shortName evidence="1">PEPCase</shortName>
        <ecNumber evidence="1">4.1.1.31</ecNumber>
    </recommendedName>
</protein>
<comment type="function">
    <text evidence="1">Forms oxaloacetate, a four-carbon dicarboxylic acid source for the tricarboxylic acid cycle.</text>
</comment>
<comment type="catalytic activity">
    <reaction evidence="1">
        <text>oxaloacetate + phosphate = phosphoenolpyruvate + hydrogencarbonate</text>
        <dbReference type="Rhea" id="RHEA:28370"/>
        <dbReference type="ChEBI" id="CHEBI:16452"/>
        <dbReference type="ChEBI" id="CHEBI:17544"/>
        <dbReference type="ChEBI" id="CHEBI:43474"/>
        <dbReference type="ChEBI" id="CHEBI:58702"/>
        <dbReference type="EC" id="4.1.1.31"/>
    </reaction>
</comment>
<comment type="cofactor">
    <cofactor evidence="1">
        <name>Mg(2+)</name>
        <dbReference type="ChEBI" id="CHEBI:18420"/>
    </cofactor>
</comment>
<comment type="similarity">
    <text evidence="1">Belongs to the PEPCase type 1 family.</text>
</comment>
<reference key="1">
    <citation type="submission" date="2009-07" db="EMBL/GenBank/DDBJ databases">
        <title>Complete sequence of Pectobacterium carotovorum subsp. carotovorum PC1.</title>
        <authorList>
            <consortium name="US DOE Joint Genome Institute"/>
            <person name="Lucas S."/>
            <person name="Copeland A."/>
            <person name="Lapidus A."/>
            <person name="Glavina del Rio T."/>
            <person name="Tice H."/>
            <person name="Bruce D."/>
            <person name="Goodwin L."/>
            <person name="Pitluck S."/>
            <person name="Munk A.C."/>
            <person name="Brettin T."/>
            <person name="Detter J.C."/>
            <person name="Han C."/>
            <person name="Tapia R."/>
            <person name="Larimer F."/>
            <person name="Land M."/>
            <person name="Hauser L."/>
            <person name="Kyrpides N."/>
            <person name="Mikhailova N."/>
            <person name="Balakrishnan V."/>
            <person name="Glasner J."/>
            <person name="Perna N.T."/>
        </authorList>
    </citation>
    <scope>NUCLEOTIDE SEQUENCE [LARGE SCALE GENOMIC DNA]</scope>
    <source>
        <strain>PC1</strain>
    </source>
</reference>
<feature type="chain" id="PRO_1000212178" description="Phosphoenolpyruvate carboxylase">
    <location>
        <begin position="1"/>
        <end position="879"/>
    </location>
</feature>
<feature type="active site" evidence="1">
    <location>
        <position position="138"/>
    </location>
</feature>
<feature type="active site" evidence="1">
    <location>
        <position position="546"/>
    </location>
</feature>
<name>CAPP_PECCP</name>
<dbReference type="EC" id="4.1.1.31" evidence="1"/>
<dbReference type="EMBL" id="CP001657">
    <property type="protein sequence ID" value="ACT15080.1"/>
    <property type="molecule type" value="Genomic_DNA"/>
</dbReference>
<dbReference type="RefSeq" id="WP_015842157.1">
    <property type="nucleotide sequence ID" value="NC_012917.1"/>
</dbReference>
<dbReference type="SMR" id="C6DI86"/>
<dbReference type="STRING" id="561230.PC1_4065"/>
<dbReference type="KEGG" id="pct:PC1_4065"/>
<dbReference type="eggNOG" id="COG2352">
    <property type="taxonomic scope" value="Bacteria"/>
</dbReference>
<dbReference type="HOGENOM" id="CLU_006557_2_0_6"/>
<dbReference type="OrthoDB" id="9768133at2"/>
<dbReference type="Proteomes" id="UP000002736">
    <property type="component" value="Chromosome"/>
</dbReference>
<dbReference type="GO" id="GO:0005829">
    <property type="term" value="C:cytosol"/>
    <property type="evidence" value="ECO:0007669"/>
    <property type="project" value="TreeGrafter"/>
</dbReference>
<dbReference type="GO" id="GO:0000287">
    <property type="term" value="F:magnesium ion binding"/>
    <property type="evidence" value="ECO:0007669"/>
    <property type="project" value="UniProtKB-UniRule"/>
</dbReference>
<dbReference type="GO" id="GO:0008964">
    <property type="term" value="F:phosphoenolpyruvate carboxylase activity"/>
    <property type="evidence" value="ECO:0007669"/>
    <property type="project" value="UniProtKB-UniRule"/>
</dbReference>
<dbReference type="GO" id="GO:0015977">
    <property type="term" value="P:carbon fixation"/>
    <property type="evidence" value="ECO:0007669"/>
    <property type="project" value="UniProtKB-UniRule"/>
</dbReference>
<dbReference type="GO" id="GO:0006107">
    <property type="term" value="P:oxaloacetate metabolic process"/>
    <property type="evidence" value="ECO:0007669"/>
    <property type="project" value="UniProtKB-UniRule"/>
</dbReference>
<dbReference type="GO" id="GO:0006099">
    <property type="term" value="P:tricarboxylic acid cycle"/>
    <property type="evidence" value="ECO:0007669"/>
    <property type="project" value="InterPro"/>
</dbReference>
<dbReference type="FunFam" id="1.20.1440.90:FF:000002">
    <property type="entry name" value="Phosphoenolpyruvate carboxylase"/>
    <property type="match status" value="1"/>
</dbReference>
<dbReference type="Gene3D" id="1.20.1440.90">
    <property type="entry name" value="Phosphoenolpyruvate/pyruvate domain"/>
    <property type="match status" value="1"/>
</dbReference>
<dbReference type="HAMAP" id="MF_00595">
    <property type="entry name" value="PEPcase_type1"/>
    <property type="match status" value="1"/>
</dbReference>
<dbReference type="InterPro" id="IPR021135">
    <property type="entry name" value="PEP_COase"/>
</dbReference>
<dbReference type="InterPro" id="IPR022805">
    <property type="entry name" value="PEP_COase_bac/pln-type"/>
</dbReference>
<dbReference type="InterPro" id="IPR018129">
    <property type="entry name" value="PEP_COase_Lys_AS"/>
</dbReference>
<dbReference type="InterPro" id="IPR033129">
    <property type="entry name" value="PEPCASE_His_AS"/>
</dbReference>
<dbReference type="InterPro" id="IPR015813">
    <property type="entry name" value="Pyrv/PenolPyrv_kinase-like_dom"/>
</dbReference>
<dbReference type="NCBIfam" id="NF000584">
    <property type="entry name" value="PRK00009.1"/>
    <property type="match status" value="1"/>
</dbReference>
<dbReference type="PANTHER" id="PTHR30523">
    <property type="entry name" value="PHOSPHOENOLPYRUVATE CARBOXYLASE"/>
    <property type="match status" value="1"/>
</dbReference>
<dbReference type="PANTHER" id="PTHR30523:SF6">
    <property type="entry name" value="PHOSPHOENOLPYRUVATE CARBOXYLASE"/>
    <property type="match status" value="1"/>
</dbReference>
<dbReference type="Pfam" id="PF00311">
    <property type="entry name" value="PEPcase"/>
    <property type="match status" value="1"/>
</dbReference>
<dbReference type="PRINTS" id="PR00150">
    <property type="entry name" value="PEPCARBXLASE"/>
</dbReference>
<dbReference type="SUPFAM" id="SSF51621">
    <property type="entry name" value="Phosphoenolpyruvate/pyruvate domain"/>
    <property type="match status" value="1"/>
</dbReference>
<dbReference type="PROSITE" id="PS00781">
    <property type="entry name" value="PEPCASE_1"/>
    <property type="match status" value="1"/>
</dbReference>
<dbReference type="PROSITE" id="PS00393">
    <property type="entry name" value="PEPCASE_2"/>
    <property type="match status" value="1"/>
</dbReference>
<sequence length="879" mass="98620">MNEQYSAMRSNVSMLGKLLGDTIKEALGENILDKVETIRKLSKSSRAGNEKHRQELLTTLQNLSNDELLPVARAFSQFLNLTNTAEQYHTISPHGEAASNPAQLSSAFERLKESKDLTERDIRDAVESLSIELVLTAHPTEITRRTLIHKLVEVNTCLKQLDHNDLADYERNQIMRRLRQLIAQSWHTDEIRKIRPTPVDEAKWGFAVVENSLWEGVPAFLRELDEQLEQAFGYRLPVDAVPVRFTSWMGGDRDGNPNVTAEVTRHVLLLSRWKAADLFLRDIQVLVSELSMSECTPELLELAGGSEVQEPYRAIMKSLRSQLSSTLSYLEARLTGEERLPPKDLLITNEQLWEPLHACYQSLKSCGMGIIADGRLLDTLRRVRCFGVPLVRIDVRQESTRHTEALAEITRYLGLGDYESWSESDKQAFLIRELSSKRPLLPRYWEPSADTKEVLDTCRVIAKAPQGSIAAYVISMARTPSDVLAVHLLLKEAGCSFALPVAPLFETLDDLNNADDVMTQLLSIDWYRGFIQGKQMVMIGYSDSAKDAGVMAASWAQYRAQDALIKTCEKAGIALTLFHGRGGSIGRGGAPAHAALLSQPPGSLKGGLRVTEQGEMIRFKYGLPEVTISSLALYTGAILEANLLPPPEPKQEWHEVMDELSRVSCDMYRGYVRENPDFVPYFRAATPELELGKLPLGSRPAKRRPNGGVESLRAIPWIFAWTQNRLMLPAWLGAGAALQKVVDDGKQEQLEEMCRDWPFFSTRIGMLEMVFAKADLWLAEYYDQRLVDEKLWPLGKQLRDQLAADINIVLAISNDDHLMADLPWIAESIALRNVYTDPLNVLQAELLHRSRQQEKPDADLELALMVTIAGVAAGMRNTG</sequence>